<gene>
    <name evidence="1" type="primary">rutE</name>
    <name type="ordered locus">EC55989_1119</name>
</gene>
<feature type="chain" id="PRO_1000164651" description="Probable malonic semialdehyde reductase RutE">
    <location>
        <begin position="1"/>
        <end position="196"/>
    </location>
</feature>
<keyword id="KW-0285">Flavoprotein</keyword>
<keyword id="KW-0288">FMN</keyword>
<keyword id="KW-0520">NAD</keyword>
<keyword id="KW-0521">NADP</keyword>
<keyword id="KW-0560">Oxidoreductase</keyword>
<keyword id="KW-1185">Reference proteome</keyword>
<reference key="1">
    <citation type="journal article" date="2009" name="PLoS Genet.">
        <title>Organised genome dynamics in the Escherichia coli species results in highly diverse adaptive paths.</title>
        <authorList>
            <person name="Touchon M."/>
            <person name="Hoede C."/>
            <person name="Tenaillon O."/>
            <person name="Barbe V."/>
            <person name="Baeriswyl S."/>
            <person name="Bidet P."/>
            <person name="Bingen E."/>
            <person name="Bonacorsi S."/>
            <person name="Bouchier C."/>
            <person name="Bouvet O."/>
            <person name="Calteau A."/>
            <person name="Chiapello H."/>
            <person name="Clermont O."/>
            <person name="Cruveiller S."/>
            <person name="Danchin A."/>
            <person name="Diard M."/>
            <person name="Dossat C."/>
            <person name="Karoui M.E."/>
            <person name="Frapy E."/>
            <person name="Garry L."/>
            <person name="Ghigo J.M."/>
            <person name="Gilles A.M."/>
            <person name="Johnson J."/>
            <person name="Le Bouguenec C."/>
            <person name="Lescat M."/>
            <person name="Mangenot S."/>
            <person name="Martinez-Jehanne V."/>
            <person name="Matic I."/>
            <person name="Nassif X."/>
            <person name="Oztas S."/>
            <person name="Petit M.A."/>
            <person name="Pichon C."/>
            <person name="Rouy Z."/>
            <person name="Ruf C.S."/>
            <person name="Schneider D."/>
            <person name="Tourret J."/>
            <person name="Vacherie B."/>
            <person name="Vallenet D."/>
            <person name="Medigue C."/>
            <person name="Rocha E.P.C."/>
            <person name="Denamur E."/>
        </authorList>
    </citation>
    <scope>NUCLEOTIDE SEQUENCE [LARGE SCALE GENOMIC DNA]</scope>
    <source>
        <strain>55989 / EAEC</strain>
    </source>
</reference>
<dbReference type="EC" id="1.1.1.298" evidence="1"/>
<dbReference type="EMBL" id="CU928145">
    <property type="protein sequence ID" value="CAU96980.1"/>
    <property type="molecule type" value="Genomic_DNA"/>
</dbReference>
<dbReference type="RefSeq" id="WP_001001196.1">
    <property type="nucleotide sequence ID" value="NC_011748.1"/>
</dbReference>
<dbReference type="SMR" id="B7LFB8"/>
<dbReference type="KEGG" id="eck:EC55989_1119"/>
<dbReference type="HOGENOM" id="CLU_084441_0_0_6"/>
<dbReference type="Proteomes" id="UP000000746">
    <property type="component" value="Chromosome"/>
</dbReference>
<dbReference type="GO" id="GO:0035527">
    <property type="term" value="F:3-hydroxypropionate dehydrogenase (NADP+) activity"/>
    <property type="evidence" value="ECO:0007669"/>
    <property type="project" value="UniProtKB-UniRule"/>
</dbReference>
<dbReference type="GO" id="GO:0019740">
    <property type="term" value="P:nitrogen utilization"/>
    <property type="evidence" value="ECO:0007669"/>
    <property type="project" value="UniProtKB-UniRule"/>
</dbReference>
<dbReference type="GO" id="GO:0006212">
    <property type="term" value="P:uracil catabolic process"/>
    <property type="evidence" value="ECO:0007669"/>
    <property type="project" value="UniProtKB-UniRule"/>
</dbReference>
<dbReference type="CDD" id="cd02148">
    <property type="entry name" value="RutE-like"/>
    <property type="match status" value="1"/>
</dbReference>
<dbReference type="FunFam" id="3.40.109.10:FF:000003">
    <property type="entry name" value="Probable malonic semialdehyde reductase RutE"/>
    <property type="match status" value="1"/>
</dbReference>
<dbReference type="Gene3D" id="3.40.109.10">
    <property type="entry name" value="NADH Oxidase"/>
    <property type="match status" value="1"/>
</dbReference>
<dbReference type="HAMAP" id="MF_01204">
    <property type="entry name" value="Oxidoreductase_RutE_HadB"/>
    <property type="match status" value="1"/>
</dbReference>
<dbReference type="InterPro" id="IPR029479">
    <property type="entry name" value="Nitroreductase"/>
</dbReference>
<dbReference type="InterPro" id="IPR000415">
    <property type="entry name" value="Nitroreductase-like"/>
</dbReference>
<dbReference type="InterPro" id="IPR050461">
    <property type="entry name" value="Nitroreductase_HadB/RutE"/>
</dbReference>
<dbReference type="InterPro" id="IPR023936">
    <property type="entry name" value="RutE-like"/>
</dbReference>
<dbReference type="NCBIfam" id="NF003768">
    <property type="entry name" value="PRK05365.1"/>
    <property type="match status" value="1"/>
</dbReference>
<dbReference type="PANTHER" id="PTHR43543">
    <property type="entry name" value="MALONIC SEMIALDEHYDE REDUCTASE RUTE-RELATED"/>
    <property type="match status" value="1"/>
</dbReference>
<dbReference type="PANTHER" id="PTHR43543:SF1">
    <property type="entry name" value="MALONIC SEMIALDEHYDE REDUCTASE RUTE-RELATED"/>
    <property type="match status" value="1"/>
</dbReference>
<dbReference type="Pfam" id="PF00881">
    <property type="entry name" value="Nitroreductase"/>
    <property type="match status" value="1"/>
</dbReference>
<dbReference type="SUPFAM" id="SSF55469">
    <property type="entry name" value="FMN-dependent nitroreductase-like"/>
    <property type="match status" value="1"/>
</dbReference>
<comment type="function">
    <text evidence="1">May reduce toxic product malonic semialdehyde to 3-hydroxypropionic acid, which is excreted.</text>
</comment>
<comment type="catalytic activity">
    <reaction evidence="1">
        <text>3-hydroxypropanoate + NADP(+) = 3-oxopropanoate + NADPH + H(+)</text>
        <dbReference type="Rhea" id="RHEA:26438"/>
        <dbReference type="ChEBI" id="CHEBI:15378"/>
        <dbReference type="ChEBI" id="CHEBI:16510"/>
        <dbReference type="ChEBI" id="CHEBI:33190"/>
        <dbReference type="ChEBI" id="CHEBI:57783"/>
        <dbReference type="ChEBI" id="CHEBI:58349"/>
        <dbReference type="EC" id="1.1.1.298"/>
    </reaction>
</comment>
<comment type="cofactor">
    <cofactor evidence="1">
        <name>FMN</name>
        <dbReference type="ChEBI" id="CHEBI:58210"/>
    </cofactor>
</comment>
<comment type="induction">
    <text evidence="1">Up-regulated by the nitrogen regulatory protein C (NtrC also called GlnG) and repressed by RutR.</text>
</comment>
<comment type="similarity">
    <text evidence="1">Belongs to the nitroreductase family. HadB/RutE subfamily.</text>
</comment>
<protein>
    <recommendedName>
        <fullName evidence="1">Probable malonic semialdehyde reductase RutE</fullName>
        <ecNumber evidence="1">1.1.1.298</ecNumber>
    </recommendedName>
</protein>
<sequence>MNEAVSPGALSTLFTDARTHNGWRETPVSDETLRELYALMKWGPTSANCSPARIVFIRTVEGKERLRPALSSGNLQKTLTAPVTAIVAWDSEFYERLPLLFPHGDARSWFTSSPQLAEETAFRNSSMQAAYLIVACRALGLDTGPMSGFDRQYVDDAFFAGSTLKSNLLINIGYGDSSKLYARLPRLSFEEACGLL</sequence>
<proteinExistence type="inferred from homology"/>
<name>RUTE_ECO55</name>
<organism>
    <name type="scientific">Escherichia coli (strain 55989 / EAEC)</name>
    <dbReference type="NCBI Taxonomy" id="585055"/>
    <lineage>
        <taxon>Bacteria</taxon>
        <taxon>Pseudomonadati</taxon>
        <taxon>Pseudomonadota</taxon>
        <taxon>Gammaproteobacteria</taxon>
        <taxon>Enterobacterales</taxon>
        <taxon>Enterobacteriaceae</taxon>
        <taxon>Escherichia</taxon>
    </lineage>
</organism>
<accession>B7LFB8</accession>
<evidence type="ECO:0000255" key="1">
    <source>
        <dbReference type="HAMAP-Rule" id="MF_01204"/>
    </source>
</evidence>